<organism>
    <name type="scientific">Burkholderia multivorans (strain ATCC 17616 / 249)</name>
    <dbReference type="NCBI Taxonomy" id="395019"/>
    <lineage>
        <taxon>Bacteria</taxon>
        <taxon>Pseudomonadati</taxon>
        <taxon>Pseudomonadota</taxon>
        <taxon>Betaproteobacteria</taxon>
        <taxon>Burkholderiales</taxon>
        <taxon>Burkholderiaceae</taxon>
        <taxon>Burkholderia</taxon>
        <taxon>Burkholderia cepacia complex</taxon>
    </lineage>
</organism>
<gene>
    <name evidence="1" type="primary">rsmA</name>
    <name evidence="1" type="synonym">ksgA</name>
    <name type="ordered locus">Bmul_0591</name>
    <name type="ordered locus">BMULJ_02670</name>
</gene>
<accession>A9AFE4</accession>
<comment type="function">
    <text evidence="1">Specifically dimethylates two adjacent adenosines (A1518 and A1519) in the loop of a conserved hairpin near the 3'-end of 16S rRNA in the 30S particle. May play a critical role in biogenesis of 30S subunits.</text>
</comment>
<comment type="catalytic activity">
    <reaction evidence="1">
        <text>adenosine(1518)/adenosine(1519) in 16S rRNA + 4 S-adenosyl-L-methionine = N(6)-dimethyladenosine(1518)/N(6)-dimethyladenosine(1519) in 16S rRNA + 4 S-adenosyl-L-homocysteine + 4 H(+)</text>
        <dbReference type="Rhea" id="RHEA:19609"/>
        <dbReference type="Rhea" id="RHEA-COMP:10232"/>
        <dbReference type="Rhea" id="RHEA-COMP:10233"/>
        <dbReference type="ChEBI" id="CHEBI:15378"/>
        <dbReference type="ChEBI" id="CHEBI:57856"/>
        <dbReference type="ChEBI" id="CHEBI:59789"/>
        <dbReference type="ChEBI" id="CHEBI:74411"/>
        <dbReference type="ChEBI" id="CHEBI:74493"/>
        <dbReference type="EC" id="2.1.1.182"/>
    </reaction>
</comment>
<comment type="subcellular location">
    <subcellularLocation>
        <location evidence="1">Cytoplasm</location>
    </subcellularLocation>
</comment>
<comment type="similarity">
    <text evidence="1">Belongs to the class I-like SAM-binding methyltransferase superfamily. rRNA adenine N(6)-methyltransferase family. RsmA subfamily.</text>
</comment>
<name>RSMA_BURM1</name>
<feature type="chain" id="PRO_1000130253" description="Ribosomal RNA small subunit methyltransferase A">
    <location>
        <begin position="1"/>
        <end position="275"/>
    </location>
</feature>
<feature type="binding site" evidence="1">
    <location>
        <position position="19"/>
    </location>
    <ligand>
        <name>S-adenosyl-L-methionine</name>
        <dbReference type="ChEBI" id="CHEBI:59789"/>
    </ligand>
</feature>
<feature type="binding site" evidence="1">
    <location>
        <position position="21"/>
    </location>
    <ligand>
        <name>S-adenosyl-L-methionine</name>
        <dbReference type="ChEBI" id="CHEBI:59789"/>
    </ligand>
</feature>
<feature type="binding site" evidence="1">
    <location>
        <position position="46"/>
    </location>
    <ligand>
        <name>S-adenosyl-L-methionine</name>
        <dbReference type="ChEBI" id="CHEBI:59789"/>
    </ligand>
</feature>
<feature type="binding site" evidence="1">
    <location>
        <position position="71"/>
    </location>
    <ligand>
        <name>S-adenosyl-L-methionine</name>
        <dbReference type="ChEBI" id="CHEBI:59789"/>
    </ligand>
</feature>
<feature type="binding site" evidence="1">
    <location>
        <position position="94"/>
    </location>
    <ligand>
        <name>S-adenosyl-L-methionine</name>
        <dbReference type="ChEBI" id="CHEBI:59789"/>
    </ligand>
</feature>
<feature type="binding site" evidence="1">
    <location>
        <position position="117"/>
    </location>
    <ligand>
        <name>S-adenosyl-L-methionine</name>
        <dbReference type="ChEBI" id="CHEBI:59789"/>
    </ligand>
</feature>
<sequence>MSNSRQHQGHFARKRFGQNFLVDHGVIDSIVATIAPARGQRMVEIGPGLGALTEPLIARLATPETPLHAVELDRDLIARLKQRFGALLELHAGDALAFDFRSLAAPGDAPSLRIVGNLPYNISSPLLFHLMTFADVVVDQHFMLQNEVVERMVAEPGTKAFSRLSVMLQYRYVMDKLIDVPPESFQPPPKVDSAIVRMIPYAPHELPDVDPVLLGEIVTAAFSQRRKMLRNTLGDYRETIDFDALGFDLARRAEDVSVAEYVGVAQALAATRNAQ</sequence>
<reference key="1">
    <citation type="submission" date="2007-10" db="EMBL/GenBank/DDBJ databases">
        <title>Complete sequence of chromosome 1 of Burkholderia multivorans ATCC 17616.</title>
        <authorList>
            <person name="Copeland A."/>
            <person name="Lucas S."/>
            <person name="Lapidus A."/>
            <person name="Barry K."/>
            <person name="Glavina del Rio T."/>
            <person name="Dalin E."/>
            <person name="Tice H."/>
            <person name="Pitluck S."/>
            <person name="Chain P."/>
            <person name="Malfatti S."/>
            <person name="Shin M."/>
            <person name="Vergez L."/>
            <person name="Schmutz J."/>
            <person name="Larimer F."/>
            <person name="Land M."/>
            <person name="Hauser L."/>
            <person name="Kyrpides N."/>
            <person name="Kim E."/>
            <person name="Tiedje J."/>
            <person name="Richardson P."/>
        </authorList>
    </citation>
    <scope>NUCLEOTIDE SEQUENCE [LARGE SCALE GENOMIC DNA]</scope>
    <source>
        <strain>ATCC 17616 / 249</strain>
    </source>
</reference>
<reference key="2">
    <citation type="submission" date="2007-04" db="EMBL/GenBank/DDBJ databases">
        <title>Complete genome sequence of Burkholderia multivorans ATCC 17616.</title>
        <authorList>
            <person name="Ohtsubo Y."/>
            <person name="Yamashita A."/>
            <person name="Kurokawa K."/>
            <person name="Takami H."/>
            <person name="Yuhara S."/>
            <person name="Nishiyama E."/>
            <person name="Endo R."/>
            <person name="Miyazaki R."/>
            <person name="Ono A."/>
            <person name="Yano K."/>
            <person name="Ito M."/>
            <person name="Sota M."/>
            <person name="Yuji N."/>
            <person name="Hattori M."/>
            <person name="Tsuda M."/>
        </authorList>
    </citation>
    <scope>NUCLEOTIDE SEQUENCE [LARGE SCALE GENOMIC DNA]</scope>
    <source>
        <strain>ATCC 17616 / 249</strain>
    </source>
</reference>
<evidence type="ECO:0000255" key="1">
    <source>
        <dbReference type="HAMAP-Rule" id="MF_00607"/>
    </source>
</evidence>
<proteinExistence type="inferred from homology"/>
<dbReference type="EC" id="2.1.1.182" evidence="1"/>
<dbReference type="EMBL" id="CP000868">
    <property type="protein sequence ID" value="ABX14286.1"/>
    <property type="molecule type" value="Genomic_DNA"/>
</dbReference>
<dbReference type="EMBL" id="AP009385">
    <property type="protein sequence ID" value="BAG44560.1"/>
    <property type="molecule type" value="Genomic_DNA"/>
</dbReference>
<dbReference type="RefSeq" id="WP_012212743.1">
    <property type="nucleotide sequence ID" value="NC_010084.1"/>
</dbReference>
<dbReference type="SMR" id="A9AFE4"/>
<dbReference type="STRING" id="395019.BMULJ_02670"/>
<dbReference type="KEGG" id="bmj:BMULJ_02670"/>
<dbReference type="KEGG" id="bmu:Bmul_0591"/>
<dbReference type="eggNOG" id="COG0030">
    <property type="taxonomic scope" value="Bacteria"/>
</dbReference>
<dbReference type="HOGENOM" id="CLU_041220_0_1_4"/>
<dbReference type="Proteomes" id="UP000008815">
    <property type="component" value="Chromosome 1"/>
</dbReference>
<dbReference type="GO" id="GO:0005829">
    <property type="term" value="C:cytosol"/>
    <property type="evidence" value="ECO:0007669"/>
    <property type="project" value="TreeGrafter"/>
</dbReference>
<dbReference type="GO" id="GO:0052908">
    <property type="term" value="F:16S rRNA (adenine(1518)-N(6)/adenine(1519)-N(6))-dimethyltransferase activity"/>
    <property type="evidence" value="ECO:0007669"/>
    <property type="project" value="UniProtKB-EC"/>
</dbReference>
<dbReference type="GO" id="GO:0003723">
    <property type="term" value="F:RNA binding"/>
    <property type="evidence" value="ECO:0007669"/>
    <property type="project" value="UniProtKB-KW"/>
</dbReference>
<dbReference type="FunFam" id="1.10.8.100:FF:000001">
    <property type="entry name" value="Ribosomal RNA small subunit methyltransferase A"/>
    <property type="match status" value="1"/>
</dbReference>
<dbReference type="Gene3D" id="1.10.8.100">
    <property type="entry name" value="Ribosomal RNA adenine dimethylase-like, domain 2"/>
    <property type="match status" value="1"/>
</dbReference>
<dbReference type="Gene3D" id="3.40.50.150">
    <property type="entry name" value="Vaccinia Virus protein VP39"/>
    <property type="match status" value="1"/>
</dbReference>
<dbReference type="HAMAP" id="MF_00607">
    <property type="entry name" value="16SrRNA_methyltr_A"/>
    <property type="match status" value="1"/>
</dbReference>
<dbReference type="InterPro" id="IPR001737">
    <property type="entry name" value="KsgA/Erm"/>
</dbReference>
<dbReference type="InterPro" id="IPR023165">
    <property type="entry name" value="rRNA_Ade_diMease-like_C"/>
</dbReference>
<dbReference type="InterPro" id="IPR020598">
    <property type="entry name" value="rRNA_Ade_methylase_Trfase_N"/>
</dbReference>
<dbReference type="InterPro" id="IPR011530">
    <property type="entry name" value="rRNA_adenine_dimethylase"/>
</dbReference>
<dbReference type="InterPro" id="IPR029063">
    <property type="entry name" value="SAM-dependent_MTases_sf"/>
</dbReference>
<dbReference type="NCBIfam" id="TIGR00755">
    <property type="entry name" value="ksgA"/>
    <property type="match status" value="1"/>
</dbReference>
<dbReference type="PANTHER" id="PTHR11727">
    <property type="entry name" value="DIMETHYLADENOSINE TRANSFERASE"/>
    <property type="match status" value="1"/>
</dbReference>
<dbReference type="PANTHER" id="PTHR11727:SF7">
    <property type="entry name" value="DIMETHYLADENOSINE TRANSFERASE-RELATED"/>
    <property type="match status" value="1"/>
</dbReference>
<dbReference type="Pfam" id="PF00398">
    <property type="entry name" value="RrnaAD"/>
    <property type="match status" value="1"/>
</dbReference>
<dbReference type="SMART" id="SM00650">
    <property type="entry name" value="rADc"/>
    <property type="match status" value="1"/>
</dbReference>
<dbReference type="SUPFAM" id="SSF53335">
    <property type="entry name" value="S-adenosyl-L-methionine-dependent methyltransferases"/>
    <property type="match status" value="1"/>
</dbReference>
<dbReference type="PROSITE" id="PS51689">
    <property type="entry name" value="SAM_RNA_A_N6_MT"/>
    <property type="match status" value="1"/>
</dbReference>
<keyword id="KW-0963">Cytoplasm</keyword>
<keyword id="KW-0489">Methyltransferase</keyword>
<keyword id="KW-1185">Reference proteome</keyword>
<keyword id="KW-0694">RNA-binding</keyword>
<keyword id="KW-0698">rRNA processing</keyword>
<keyword id="KW-0949">S-adenosyl-L-methionine</keyword>
<keyword id="KW-0808">Transferase</keyword>
<protein>
    <recommendedName>
        <fullName evidence="1">Ribosomal RNA small subunit methyltransferase A</fullName>
        <ecNumber evidence="1">2.1.1.182</ecNumber>
    </recommendedName>
    <alternativeName>
        <fullName evidence="1">16S rRNA (adenine(1518)-N(6)/adenine(1519)-N(6))-dimethyltransferase</fullName>
    </alternativeName>
    <alternativeName>
        <fullName evidence="1">16S rRNA dimethyladenosine transferase</fullName>
    </alternativeName>
    <alternativeName>
        <fullName evidence="1">16S rRNA dimethylase</fullName>
    </alternativeName>
    <alternativeName>
        <fullName evidence="1">S-adenosylmethionine-6-N', N'-adenosyl(rRNA) dimethyltransferase</fullName>
    </alternativeName>
</protein>